<dbReference type="EC" id="2.7.11.1"/>
<dbReference type="EMBL" id="CM002241">
    <property type="protein sequence ID" value="ESA42235.1"/>
    <property type="molecule type" value="Genomic_DNA"/>
</dbReference>
<dbReference type="EMBL" id="CM002241">
    <property type="protein sequence ID" value="ESA42236.1"/>
    <property type="molecule type" value="Genomic_DNA"/>
</dbReference>
<dbReference type="RefSeq" id="XP_011394882.1">
    <property type="nucleotide sequence ID" value="XM_011396580.1"/>
</dbReference>
<dbReference type="RefSeq" id="XP_011394883.1">
    <property type="nucleotide sequence ID" value="XM_011396581.1"/>
</dbReference>
<dbReference type="SMR" id="Q7RZD3"/>
<dbReference type="FunCoup" id="Q7RZD3">
    <property type="interactions" value="356"/>
</dbReference>
<dbReference type="STRING" id="367110.Q7RZD3"/>
<dbReference type="PaxDb" id="5141-EFNCRP00000003720"/>
<dbReference type="EnsemblFungi" id="ESA42235">
    <property type="protein sequence ID" value="ESA42235"/>
    <property type="gene ID" value="NCU03894"/>
</dbReference>
<dbReference type="EnsemblFungi" id="ESA42236">
    <property type="protein sequence ID" value="ESA42236"/>
    <property type="gene ID" value="NCU03894"/>
</dbReference>
<dbReference type="GeneID" id="3873759"/>
<dbReference type="KEGG" id="ncr:NCU03894"/>
<dbReference type="VEuPathDB" id="FungiDB:NCU03894"/>
<dbReference type="HOGENOM" id="CLU_000288_26_1_1"/>
<dbReference type="InParanoid" id="Q7RZD3"/>
<dbReference type="OMA" id="MVDIMKF"/>
<dbReference type="OrthoDB" id="248923at2759"/>
<dbReference type="Proteomes" id="UP000001805">
    <property type="component" value="Chromosome 5, Linkage Group VI"/>
</dbReference>
<dbReference type="GO" id="GO:0005737">
    <property type="term" value="C:cytoplasm"/>
    <property type="evidence" value="ECO:0000318"/>
    <property type="project" value="GO_Central"/>
</dbReference>
<dbReference type="GO" id="GO:0000131">
    <property type="term" value="C:incipient cellular bud site"/>
    <property type="evidence" value="ECO:0007669"/>
    <property type="project" value="EnsemblFungi"/>
</dbReference>
<dbReference type="GO" id="GO:0043332">
    <property type="term" value="C:mating projection tip"/>
    <property type="evidence" value="ECO:0007669"/>
    <property type="project" value="EnsemblFungi"/>
</dbReference>
<dbReference type="GO" id="GO:0005634">
    <property type="term" value="C:nucleus"/>
    <property type="evidence" value="ECO:0007669"/>
    <property type="project" value="UniProtKB-SubCell"/>
</dbReference>
<dbReference type="GO" id="GO:0005524">
    <property type="term" value="F:ATP binding"/>
    <property type="evidence" value="ECO:0007669"/>
    <property type="project" value="UniProtKB-KW"/>
</dbReference>
<dbReference type="GO" id="GO:0044025">
    <property type="term" value="F:histone H2BS14 kinase activity"/>
    <property type="evidence" value="ECO:0007669"/>
    <property type="project" value="EnsemblFungi"/>
</dbReference>
<dbReference type="GO" id="GO:0008349">
    <property type="term" value="F:MAP kinase kinase kinase kinase activity"/>
    <property type="evidence" value="ECO:0007669"/>
    <property type="project" value="EnsemblFungi"/>
</dbReference>
<dbReference type="GO" id="GO:0106310">
    <property type="term" value="F:protein serine kinase activity"/>
    <property type="evidence" value="ECO:0007669"/>
    <property type="project" value="RHEA"/>
</dbReference>
<dbReference type="GO" id="GO:0004674">
    <property type="term" value="F:protein serine/threonine kinase activity"/>
    <property type="evidence" value="ECO:0000318"/>
    <property type="project" value="GO_Central"/>
</dbReference>
<dbReference type="GO" id="GO:0007121">
    <property type="term" value="P:bipolar cellular bud site selection"/>
    <property type="evidence" value="ECO:0007669"/>
    <property type="project" value="EnsemblFungi"/>
</dbReference>
<dbReference type="GO" id="GO:0007118">
    <property type="term" value="P:budding cell apical bud growth"/>
    <property type="evidence" value="ECO:0007669"/>
    <property type="project" value="EnsemblFungi"/>
</dbReference>
<dbReference type="GO" id="GO:0070301">
    <property type="term" value="P:cellular response to hydrogen peroxide"/>
    <property type="evidence" value="ECO:0007669"/>
    <property type="project" value="EnsemblFungi"/>
</dbReference>
<dbReference type="GO" id="GO:0009267">
    <property type="term" value="P:cellular response to starvation"/>
    <property type="evidence" value="ECO:0000318"/>
    <property type="project" value="GO_Central"/>
</dbReference>
<dbReference type="GO" id="GO:0035556">
    <property type="term" value="P:intracellular signal transduction"/>
    <property type="evidence" value="ECO:0000318"/>
    <property type="project" value="GO_Central"/>
</dbReference>
<dbReference type="GO" id="GO:0001403">
    <property type="term" value="P:invasive growth in response to glucose limitation"/>
    <property type="evidence" value="ECO:0007669"/>
    <property type="project" value="EnsemblFungi"/>
</dbReference>
<dbReference type="GO" id="GO:0010629">
    <property type="term" value="P:negative regulation of gene expression"/>
    <property type="evidence" value="ECO:0007669"/>
    <property type="project" value="EnsemblFungi"/>
</dbReference>
<dbReference type="GO" id="GO:2000910">
    <property type="term" value="P:negative regulation of sterol import"/>
    <property type="evidence" value="ECO:0007669"/>
    <property type="project" value="EnsemblFungi"/>
</dbReference>
<dbReference type="GO" id="GO:0000122">
    <property type="term" value="P:negative regulation of transcription by RNA polymerase II"/>
    <property type="evidence" value="ECO:0007669"/>
    <property type="project" value="EnsemblFungi"/>
</dbReference>
<dbReference type="GO" id="GO:0007232">
    <property type="term" value="P:osmosensory signaling pathway via Sho1 osmosensor"/>
    <property type="evidence" value="ECO:0007669"/>
    <property type="project" value="EnsemblFungi"/>
</dbReference>
<dbReference type="GO" id="GO:0000750">
    <property type="term" value="P:pheromone-dependent signal transduction involved in conjugation with cellular fusion"/>
    <property type="evidence" value="ECO:0007669"/>
    <property type="project" value="EnsemblFungi"/>
</dbReference>
<dbReference type="GO" id="GO:0043065">
    <property type="term" value="P:positive regulation of apoptotic process"/>
    <property type="evidence" value="ECO:0007669"/>
    <property type="project" value="EnsemblFungi"/>
</dbReference>
<dbReference type="GO" id="GO:0007124">
    <property type="term" value="P:pseudohyphal growth"/>
    <property type="evidence" value="ECO:0007669"/>
    <property type="project" value="EnsemblFungi"/>
</dbReference>
<dbReference type="GO" id="GO:0007096">
    <property type="term" value="P:regulation of exit from mitosis"/>
    <property type="evidence" value="ECO:0007669"/>
    <property type="project" value="EnsemblFungi"/>
</dbReference>
<dbReference type="GO" id="GO:0043408">
    <property type="term" value="P:regulation of MAPK cascade"/>
    <property type="evidence" value="ECO:0000318"/>
    <property type="project" value="GO_Central"/>
</dbReference>
<dbReference type="GO" id="GO:0001402">
    <property type="term" value="P:signal transduction involved in filamentous growth"/>
    <property type="evidence" value="ECO:0007669"/>
    <property type="project" value="EnsemblFungi"/>
</dbReference>
<dbReference type="GO" id="GO:0035376">
    <property type="term" value="P:sterol import"/>
    <property type="evidence" value="ECO:0007669"/>
    <property type="project" value="EnsemblFungi"/>
</dbReference>
<dbReference type="GO" id="GO:0034063">
    <property type="term" value="P:stress granule assembly"/>
    <property type="evidence" value="ECO:0007669"/>
    <property type="project" value="EnsemblFungi"/>
</dbReference>
<dbReference type="GO" id="GO:0000011">
    <property type="term" value="P:vacuole inheritance"/>
    <property type="evidence" value="ECO:0007669"/>
    <property type="project" value="EnsemblFungi"/>
</dbReference>
<dbReference type="CDD" id="cd01093">
    <property type="entry name" value="CRIB_PAK_like"/>
    <property type="match status" value="1"/>
</dbReference>
<dbReference type="CDD" id="cd06614">
    <property type="entry name" value="STKc_PAK"/>
    <property type="match status" value="1"/>
</dbReference>
<dbReference type="FunFam" id="1.10.510.10:FF:000011">
    <property type="entry name" value="Non-specific serine/threonine protein kinase"/>
    <property type="match status" value="1"/>
</dbReference>
<dbReference type="FunFam" id="3.30.200.20:FF:000385">
    <property type="entry name" value="Non-specific serine/threonine protein kinase"/>
    <property type="match status" value="1"/>
</dbReference>
<dbReference type="FunFam" id="3.90.810.10:FF:000007">
    <property type="entry name" value="Non-specific serine/threonine protein kinase"/>
    <property type="match status" value="1"/>
</dbReference>
<dbReference type="Gene3D" id="3.90.810.10">
    <property type="entry name" value="CRIB domain"/>
    <property type="match status" value="1"/>
</dbReference>
<dbReference type="Gene3D" id="3.30.200.20">
    <property type="entry name" value="Phosphorylase Kinase, domain 1"/>
    <property type="match status" value="1"/>
</dbReference>
<dbReference type="Gene3D" id="1.10.510.10">
    <property type="entry name" value="Transferase(Phosphotransferase) domain 1"/>
    <property type="match status" value="1"/>
</dbReference>
<dbReference type="InterPro" id="IPR000095">
    <property type="entry name" value="CRIB_dom"/>
</dbReference>
<dbReference type="InterPro" id="IPR036936">
    <property type="entry name" value="CRIB_dom_sf"/>
</dbReference>
<dbReference type="InterPro" id="IPR011009">
    <property type="entry name" value="Kinase-like_dom_sf"/>
</dbReference>
<dbReference type="InterPro" id="IPR051931">
    <property type="entry name" value="PAK3-like"/>
</dbReference>
<dbReference type="InterPro" id="IPR033923">
    <property type="entry name" value="PAK_BD"/>
</dbReference>
<dbReference type="InterPro" id="IPR000719">
    <property type="entry name" value="Prot_kinase_dom"/>
</dbReference>
<dbReference type="InterPro" id="IPR017441">
    <property type="entry name" value="Protein_kinase_ATP_BS"/>
</dbReference>
<dbReference type="InterPro" id="IPR008271">
    <property type="entry name" value="Ser/Thr_kinase_AS"/>
</dbReference>
<dbReference type="PANTHER" id="PTHR45832">
    <property type="entry name" value="SERINE/THREONINE-PROTEIN KINASE SAMKA-RELATED-RELATED"/>
    <property type="match status" value="1"/>
</dbReference>
<dbReference type="PANTHER" id="PTHR45832:SF22">
    <property type="entry name" value="SERINE_THREONINE-PROTEIN KINASE SAMKA-RELATED"/>
    <property type="match status" value="1"/>
</dbReference>
<dbReference type="Pfam" id="PF00786">
    <property type="entry name" value="PBD"/>
    <property type="match status" value="1"/>
</dbReference>
<dbReference type="Pfam" id="PF00069">
    <property type="entry name" value="Pkinase"/>
    <property type="match status" value="1"/>
</dbReference>
<dbReference type="SMART" id="SM00285">
    <property type="entry name" value="PBD"/>
    <property type="match status" value="1"/>
</dbReference>
<dbReference type="SMART" id="SM00220">
    <property type="entry name" value="S_TKc"/>
    <property type="match status" value="1"/>
</dbReference>
<dbReference type="SUPFAM" id="SSF56112">
    <property type="entry name" value="Protein kinase-like (PK-like)"/>
    <property type="match status" value="1"/>
</dbReference>
<dbReference type="PROSITE" id="PS50108">
    <property type="entry name" value="CRIB"/>
    <property type="match status" value="1"/>
</dbReference>
<dbReference type="PROSITE" id="PS00107">
    <property type="entry name" value="PROTEIN_KINASE_ATP"/>
    <property type="match status" value="1"/>
</dbReference>
<dbReference type="PROSITE" id="PS50011">
    <property type="entry name" value="PROTEIN_KINASE_DOM"/>
    <property type="match status" value="1"/>
</dbReference>
<dbReference type="PROSITE" id="PS00108">
    <property type="entry name" value="PROTEIN_KINASE_ST"/>
    <property type="match status" value="1"/>
</dbReference>
<name>STE20_NEUCR</name>
<feature type="chain" id="PRO_0000237632" description="Serine/threonine-protein kinase ste20">
    <location>
        <begin position="1"/>
        <end position="954"/>
    </location>
</feature>
<feature type="domain" description="CRIB" evidence="2">
    <location>
        <begin position="334"/>
        <end position="347"/>
    </location>
</feature>
<feature type="domain" description="Protein kinase" evidence="3">
    <location>
        <begin position="674"/>
        <end position="925"/>
    </location>
</feature>
<feature type="region of interest" description="Disordered" evidence="5">
    <location>
        <begin position="1"/>
        <end position="165"/>
    </location>
</feature>
<feature type="region of interest" description="Disordered" evidence="5">
    <location>
        <begin position="203"/>
        <end position="316"/>
    </location>
</feature>
<feature type="region of interest" description="Disordered" evidence="5">
    <location>
        <begin position="440"/>
        <end position="562"/>
    </location>
</feature>
<feature type="region of interest" description="Disordered" evidence="5">
    <location>
        <begin position="587"/>
        <end position="655"/>
    </location>
</feature>
<feature type="compositionally biased region" description="Low complexity" evidence="5">
    <location>
        <begin position="1"/>
        <end position="17"/>
    </location>
</feature>
<feature type="compositionally biased region" description="Basic residues" evidence="5">
    <location>
        <begin position="18"/>
        <end position="28"/>
    </location>
</feature>
<feature type="compositionally biased region" description="Polar residues" evidence="5">
    <location>
        <begin position="33"/>
        <end position="42"/>
    </location>
</feature>
<feature type="compositionally biased region" description="Polar residues" evidence="5">
    <location>
        <begin position="57"/>
        <end position="75"/>
    </location>
</feature>
<feature type="compositionally biased region" description="Polar residues" evidence="5">
    <location>
        <begin position="100"/>
        <end position="121"/>
    </location>
</feature>
<feature type="compositionally biased region" description="Low complexity" evidence="5">
    <location>
        <begin position="127"/>
        <end position="136"/>
    </location>
</feature>
<feature type="compositionally biased region" description="Low complexity" evidence="5">
    <location>
        <begin position="143"/>
        <end position="153"/>
    </location>
</feature>
<feature type="compositionally biased region" description="Low complexity" evidence="5">
    <location>
        <begin position="203"/>
        <end position="214"/>
    </location>
</feature>
<feature type="compositionally biased region" description="Pro residues" evidence="5">
    <location>
        <begin position="224"/>
        <end position="234"/>
    </location>
</feature>
<feature type="compositionally biased region" description="Low complexity" evidence="5">
    <location>
        <begin position="245"/>
        <end position="256"/>
    </location>
</feature>
<feature type="compositionally biased region" description="Low complexity" evidence="5">
    <location>
        <begin position="265"/>
        <end position="277"/>
    </location>
</feature>
<feature type="compositionally biased region" description="Pro residues" evidence="5">
    <location>
        <begin position="463"/>
        <end position="475"/>
    </location>
</feature>
<feature type="compositionally biased region" description="Pro residues" evidence="5">
    <location>
        <begin position="514"/>
        <end position="527"/>
    </location>
</feature>
<feature type="active site" description="Proton acceptor" evidence="3 4">
    <location>
        <position position="793"/>
    </location>
</feature>
<feature type="binding site" evidence="3">
    <location>
        <begin position="680"/>
        <end position="688"/>
    </location>
    <ligand>
        <name>ATP</name>
        <dbReference type="ChEBI" id="CHEBI:30616"/>
    </ligand>
</feature>
<feature type="binding site" evidence="3">
    <location>
        <position position="703"/>
    </location>
    <ligand>
        <name>ATP</name>
        <dbReference type="ChEBI" id="CHEBI:30616"/>
    </ligand>
</feature>
<accession>Q7RZD3</accession>
<accession>V5ILJ2</accession>
<keyword id="KW-0067">ATP-binding</keyword>
<keyword id="KW-0963">Cytoplasm</keyword>
<keyword id="KW-0418">Kinase</keyword>
<keyword id="KW-0547">Nucleotide-binding</keyword>
<keyword id="KW-0539">Nucleus</keyword>
<keyword id="KW-0589">Pheromone response</keyword>
<keyword id="KW-1185">Reference proteome</keyword>
<keyword id="KW-0723">Serine/threonine-protein kinase</keyword>
<keyword id="KW-0808">Transferase</keyword>
<sequence>MDGQLSLLSPTSSSSTSHSRKRLTKKQRPPSANHRTSSSFNVESLRIDAQSLDSKRSASSLRQGPNCNQSPSLARTVSVPVSVPSNAPAHTKASDLSLPRSHTTRSQSANRPYNPTQTIPTNRFILSPASSSQPQTQSPPYPSAVASTTVTSSRNKDTSKQYDPLDSCIGSFDQNKLSTDELIGAPFDGNAILSRIEATKLSAAPAPTSTTTIAHSNNISPRRVAPPPPPPPPALSRSNTDSKAARSSKPSKSPKSTISNKTMGASSFRHSASFSSAEQLPPSEKPSKSESSSSSNKRHSGDGKESRVPGMLRKKSGFSGFMNSLVGSPKKPLISAPENPVHVTHVGYDSNTGQFTGLPKEWQRLISESGITEKDRREHPQILVDVLTFYKETTEKPQEDQQLEKFHDARATDFRSPPVTGTAPLVLQTGVGYAHGPMSPMISPPASPRFPQVGHEGSFENPRAPPPVPKGPGPLPAKDINLIPSRPAPKPPAISTRPLVPPASLPAKDSGIGMPPPGDEAPMPYLPPKDNVQHMYQEEHRNRSRSNSRTNGAAPFSPVQASPLHPIATANQTAAYQQQLLQHQQEQAMAQAQAAMSGQLSRAASKRQQPTPPTSQHQHPRQPDINGAPRMPQTQGAAPQASARPRHRPRQSNAIDVVASLKRICSDGDPREIYRGFTKIGQGASGGVYTGHERGSNRLVAIKQMNLEQQPKKDLIINEILVMKESSHPNIVNFIDSYLCAGELWVVMEYMEGGSLTDVVTFNIMTEGQIASVCRETLRGLQHLHSKGVIHRDIKSDNILLSMEGNIKLTDFGFCATINEAQSKRTTMVGTPYWMAPEVVTRKEYGRKVDIWSLGIMAIEMIEGEPPYLTESPLRALWLIATNGTPHIKDEQSLSPVFRDFLYFALKVDPEKRASAHDLLRHDFMNKCVDLSTLAPLVRAAREARAQEKARKGQ</sequence>
<proteinExistence type="inferred from homology"/>
<gene>
    <name type="primary">stk-4</name>
    <name type="synonym">ste20</name>
    <name type="ORF">NCU03894</name>
</gene>
<organism>
    <name type="scientific">Neurospora crassa (strain ATCC 24698 / 74-OR23-1A / CBS 708.71 / DSM 1257 / FGSC 987)</name>
    <dbReference type="NCBI Taxonomy" id="367110"/>
    <lineage>
        <taxon>Eukaryota</taxon>
        <taxon>Fungi</taxon>
        <taxon>Dikarya</taxon>
        <taxon>Ascomycota</taxon>
        <taxon>Pezizomycotina</taxon>
        <taxon>Sordariomycetes</taxon>
        <taxon>Sordariomycetidae</taxon>
        <taxon>Sordariales</taxon>
        <taxon>Sordariaceae</taxon>
        <taxon>Neurospora</taxon>
    </lineage>
</organism>
<evidence type="ECO:0000250" key="1"/>
<evidence type="ECO:0000255" key="2">
    <source>
        <dbReference type="PROSITE-ProRule" id="PRU00057"/>
    </source>
</evidence>
<evidence type="ECO:0000255" key="3">
    <source>
        <dbReference type="PROSITE-ProRule" id="PRU00159"/>
    </source>
</evidence>
<evidence type="ECO:0000255" key="4">
    <source>
        <dbReference type="PROSITE-ProRule" id="PRU10027"/>
    </source>
</evidence>
<evidence type="ECO:0000256" key="5">
    <source>
        <dbReference type="SAM" id="MobiDB-lite"/>
    </source>
</evidence>
<evidence type="ECO:0000305" key="6"/>
<reference key="1">
    <citation type="journal article" date="2003" name="Nature">
        <title>The genome sequence of the filamentous fungus Neurospora crassa.</title>
        <authorList>
            <person name="Galagan J.E."/>
            <person name="Calvo S.E."/>
            <person name="Borkovich K.A."/>
            <person name="Selker E.U."/>
            <person name="Read N.D."/>
            <person name="Jaffe D.B."/>
            <person name="FitzHugh W."/>
            <person name="Ma L.-J."/>
            <person name="Smirnov S."/>
            <person name="Purcell S."/>
            <person name="Rehman B."/>
            <person name="Elkins T."/>
            <person name="Engels R."/>
            <person name="Wang S."/>
            <person name="Nielsen C.B."/>
            <person name="Butler J."/>
            <person name="Endrizzi M."/>
            <person name="Qui D."/>
            <person name="Ianakiev P."/>
            <person name="Bell-Pedersen D."/>
            <person name="Nelson M.A."/>
            <person name="Werner-Washburne M."/>
            <person name="Selitrennikoff C.P."/>
            <person name="Kinsey J.A."/>
            <person name="Braun E.L."/>
            <person name="Zelter A."/>
            <person name="Schulte U."/>
            <person name="Kothe G.O."/>
            <person name="Jedd G."/>
            <person name="Mewes H.-W."/>
            <person name="Staben C."/>
            <person name="Marcotte E."/>
            <person name="Greenberg D."/>
            <person name="Roy A."/>
            <person name="Foley K."/>
            <person name="Naylor J."/>
            <person name="Stange-Thomann N."/>
            <person name="Barrett R."/>
            <person name="Gnerre S."/>
            <person name="Kamal M."/>
            <person name="Kamvysselis M."/>
            <person name="Mauceli E.W."/>
            <person name="Bielke C."/>
            <person name="Rudd S."/>
            <person name="Frishman D."/>
            <person name="Krystofova S."/>
            <person name="Rasmussen C."/>
            <person name="Metzenberg R.L."/>
            <person name="Perkins D.D."/>
            <person name="Kroken S."/>
            <person name="Cogoni C."/>
            <person name="Macino G."/>
            <person name="Catcheside D.E.A."/>
            <person name="Li W."/>
            <person name="Pratt R.J."/>
            <person name="Osmani S.A."/>
            <person name="DeSouza C.P.C."/>
            <person name="Glass N.L."/>
            <person name="Orbach M.J."/>
            <person name="Berglund J.A."/>
            <person name="Voelker R."/>
            <person name="Yarden O."/>
            <person name="Plamann M."/>
            <person name="Seiler S."/>
            <person name="Dunlap J.C."/>
            <person name="Radford A."/>
            <person name="Aramayo R."/>
            <person name="Natvig D.O."/>
            <person name="Alex L.A."/>
            <person name="Mannhaupt G."/>
            <person name="Ebbole D.J."/>
            <person name="Freitag M."/>
            <person name="Paulsen I."/>
            <person name="Sachs M.S."/>
            <person name="Lander E.S."/>
            <person name="Nusbaum C."/>
            <person name="Birren B.W."/>
        </authorList>
    </citation>
    <scope>NUCLEOTIDE SEQUENCE [LARGE SCALE GENOMIC DNA]</scope>
    <source>
        <strain>ATCC 24698 / 74-OR23-1A / CBS 708.71 / DSM 1257 / FGSC 987</strain>
    </source>
</reference>
<comment type="function">
    <text evidence="1">MAP4K component of the MAPK pathway required for the mating pheromone response and the regulation of cell polarity and cell cycle. Phosphorylates histone H2B to form H2BS10ph (By similarity).</text>
</comment>
<comment type="catalytic activity">
    <reaction>
        <text>L-seryl-[protein] + ATP = O-phospho-L-seryl-[protein] + ADP + H(+)</text>
        <dbReference type="Rhea" id="RHEA:17989"/>
        <dbReference type="Rhea" id="RHEA-COMP:9863"/>
        <dbReference type="Rhea" id="RHEA-COMP:11604"/>
        <dbReference type="ChEBI" id="CHEBI:15378"/>
        <dbReference type="ChEBI" id="CHEBI:29999"/>
        <dbReference type="ChEBI" id="CHEBI:30616"/>
        <dbReference type="ChEBI" id="CHEBI:83421"/>
        <dbReference type="ChEBI" id="CHEBI:456216"/>
        <dbReference type="EC" id="2.7.11.1"/>
    </reaction>
</comment>
<comment type="catalytic activity">
    <reaction>
        <text>L-threonyl-[protein] + ATP = O-phospho-L-threonyl-[protein] + ADP + H(+)</text>
        <dbReference type="Rhea" id="RHEA:46608"/>
        <dbReference type="Rhea" id="RHEA-COMP:11060"/>
        <dbReference type="Rhea" id="RHEA-COMP:11605"/>
        <dbReference type="ChEBI" id="CHEBI:15378"/>
        <dbReference type="ChEBI" id="CHEBI:30013"/>
        <dbReference type="ChEBI" id="CHEBI:30616"/>
        <dbReference type="ChEBI" id="CHEBI:61977"/>
        <dbReference type="ChEBI" id="CHEBI:456216"/>
        <dbReference type="EC" id="2.7.11.1"/>
    </reaction>
</comment>
<comment type="subcellular location">
    <subcellularLocation>
        <location evidence="1">Cytoplasm</location>
    </subcellularLocation>
    <subcellularLocation>
        <location evidence="1">Nucleus</location>
    </subcellularLocation>
</comment>
<comment type="similarity">
    <text evidence="6">Belongs to the protein kinase superfamily. STE Ser/Thr protein kinase family. STE20 subfamily.</text>
</comment>
<protein>
    <recommendedName>
        <fullName>Serine/threonine-protein kinase ste20</fullName>
        <ecNumber>2.7.11.1</ecNumber>
    </recommendedName>
    <alternativeName>
        <fullName>Serine/threonine protein kinase 4</fullName>
    </alternativeName>
</protein>